<comment type="function">
    <text evidence="1">With S4 and S12 plays an important role in translational accuracy.</text>
</comment>
<comment type="subunit">
    <text evidence="1">Part of the 30S ribosomal subunit. Contacts protein S4.</text>
</comment>
<comment type="domain">
    <text>The N-terminal domain interacts with the head of the 30S subunit; the C-terminal domain interacts with the body and contacts protein S4. The interaction surface between S4 and S5 is involved in control of translational fidelity.</text>
</comment>
<comment type="similarity">
    <text evidence="1">Belongs to the universal ribosomal protein uS5 family.</text>
</comment>
<reference key="1">
    <citation type="submission" date="2007-02" db="EMBL/GenBank/DDBJ databases">
        <title>Complete sequence of Pyrobaculum calidifontis JCM 11548.</title>
        <authorList>
            <consortium name="US DOE Joint Genome Institute"/>
            <person name="Copeland A."/>
            <person name="Lucas S."/>
            <person name="Lapidus A."/>
            <person name="Barry K."/>
            <person name="Glavina del Rio T."/>
            <person name="Dalin E."/>
            <person name="Tice H."/>
            <person name="Pitluck S."/>
            <person name="Chain P."/>
            <person name="Malfatti S."/>
            <person name="Shin M."/>
            <person name="Vergez L."/>
            <person name="Schmutz J."/>
            <person name="Larimer F."/>
            <person name="Land M."/>
            <person name="Hauser L."/>
            <person name="Kyrpides N."/>
            <person name="Mikhailova N."/>
            <person name="Cozen A.E."/>
            <person name="Fitz-Gibbon S.T."/>
            <person name="House C.H."/>
            <person name="Saltikov C."/>
            <person name="Lowe T.M."/>
            <person name="Richardson P."/>
        </authorList>
    </citation>
    <scope>NUCLEOTIDE SEQUENCE [LARGE SCALE GENOMIC DNA]</scope>
    <source>
        <strain>DSM 21063 / JCM 11548 / VA1</strain>
    </source>
</reference>
<evidence type="ECO:0000255" key="1">
    <source>
        <dbReference type="HAMAP-Rule" id="MF_01307"/>
    </source>
</evidence>
<evidence type="ECO:0000305" key="2"/>
<proteinExistence type="evidence at protein level"/>
<gene>
    <name evidence="1" type="primary">rps5</name>
    <name type="ordered locus">Pcal_0779</name>
</gene>
<protein>
    <recommendedName>
        <fullName evidence="1">Small ribosomal subunit protein uS5</fullName>
    </recommendedName>
    <alternativeName>
        <fullName evidence="2">30S ribosomal protein S5</fullName>
    </alternativeName>
</protein>
<dbReference type="EMBL" id="CP000561">
    <property type="protein sequence ID" value="ABO08205.1"/>
    <property type="molecule type" value="Genomic_DNA"/>
</dbReference>
<dbReference type="RefSeq" id="WP_011849463.1">
    <property type="nucleotide sequence ID" value="NC_009073.1"/>
</dbReference>
<dbReference type="PDB" id="9E71">
    <property type="method" value="EM"/>
    <property type="resolution" value="2.36 A"/>
    <property type="chains" value="BF=1-202"/>
</dbReference>
<dbReference type="PDB" id="9E7F">
    <property type="method" value="EM"/>
    <property type="resolution" value="2.53 A"/>
    <property type="chains" value="BF=1-202"/>
</dbReference>
<dbReference type="PDBsum" id="9E71"/>
<dbReference type="PDBsum" id="9E7F"/>
<dbReference type="EMDB" id="EMD-47628"/>
<dbReference type="EMDB" id="EMD-47668"/>
<dbReference type="SMR" id="A3MU88"/>
<dbReference type="STRING" id="410359.Pcal_0779"/>
<dbReference type="GeneID" id="4910162"/>
<dbReference type="KEGG" id="pcl:Pcal_0779"/>
<dbReference type="eggNOG" id="arCOG04087">
    <property type="taxonomic scope" value="Archaea"/>
</dbReference>
<dbReference type="HOGENOM" id="CLU_065898_0_1_2"/>
<dbReference type="OrthoDB" id="38155at2157"/>
<dbReference type="Proteomes" id="UP000001431">
    <property type="component" value="Chromosome"/>
</dbReference>
<dbReference type="GO" id="GO:0022627">
    <property type="term" value="C:cytosolic small ribosomal subunit"/>
    <property type="evidence" value="ECO:0007669"/>
    <property type="project" value="TreeGrafter"/>
</dbReference>
<dbReference type="GO" id="GO:0019843">
    <property type="term" value="F:rRNA binding"/>
    <property type="evidence" value="ECO:0007669"/>
    <property type="project" value="UniProtKB-UniRule"/>
</dbReference>
<dbReference type="GO" id="GO:0003735">
    <property type="term" value="F:structural constituent of ribosome"/>
    <property type="evidence" value="ECO:0007669"/>
    <property type="project" value="InterPro"/>
</dbReference>
<dbReference type="GO" id="GO:0006412">
    <property type="term" value="P:translation"/>
    <property type="evidence" value="ECO:0007669"/>
    <property type="project" value="UniProtKB-UniRule"/>
</dbReference>
<dbReference type="FunFam" id="3.30.160.20:FF:000002">
    <property type="entry name" value="40S ribosomal protein S2"/>
    <property type="match status" value="1"/>
</dbReference>
<dbReference type="FunFam" id="3.30.230.10:FF:000004">
    <property type="entry name" value="40S ribosomal protein S2"/>
    <property type="match status" value="1"/>
</dbReference>
<dbReference type="Gene3D" id="3.30.160.20">
    <property type="match status" value="1"/>
</dbReference>
<dbReference type="Gene3D" id="3.30.230.10">
    <property type="match status" value="1"/>
</dbReference>
<dbReference type="HAMAP" id="MF_01307_A">
    <property type="entry name" value="Ribosomal_uS5_A"/>
    <property type="match status" value="1"/>
</dbReference>
<dbReference type="InterPro" id="IPR020568">
    <property type="entry name" value="Ribosomal_Su5_D2-typ_SF"/>
</dbReference>
<dbReference type="InterPro" id="IPR000851">
    <property type="entry name" value="Ribosomal_uS5"/>
</dbReference>
<dbReference type="InterPro" id="IPR047866">
    <property type="entry name" value="Ribosomal_uS5_arc"/>
</dbReference>
<dbReference type="InterPro" id="IPR005324">
    <property type="entry name" value="Ribosomal_uS5_C"/>
</dbReference>
<dbReference type="InterPro" id="IPR005711">
    <property type="entry name" value="Ribosomal_uS5_euk/arc"/>
</dbReference>
<dbReference type="InterPro" id="IPR013810">
    <property type="entry name" value="Ribosomal_uS5_N"/>
</dbReference>
<dbReference type="InterPro" id="IPR018192">
    <property type="entry name" value="Ribosomal_uS5_N_CS"/>
</dbReference>
<dbReference type="InterPro" id="IPR014721">
    <property type="entry name" value="Ribsml_uS5_D2-typ_fold_subgr"/>
</dbReference>
<dbReference type="NCBIfam" id="NF003125">
    <property type="entry name" value="PRK04044.1"/>
    <property type="match status" value="1"/>
</dbReference>
<dbReference type="NCBIfam" id="TIGR01020">
    <property type="entry name" value="uS5_euk_arch"/>
    <property type="match status" value="1"/>
</dbReference>
<dbReference type="PANTHER" id="PTHR13718:SF4">
    <property type="entry name" value="40S RIBOSOMAL PROTEIN S2"/>
    <property type="match status" value="1"/>
</dbReference>
<dbReference type="PANTHER" id="PTHR13718">
    <property type="entry name" value="RIBOSOMAL S SUBUNIT"/>
    <property type="match status" value="1"/>
</dbReference>
<dbReference type="Pfam" id="PF00333">
    <property type="entry name" value="Ribosomal_S5"/>
    <property type="match status" value="1"/>
</dbReference>
<dbReference type="Pfam" id="PF03719">
    <property type="entry name" value="Ribosomal_S5_C"/>
    <property type="match status" value="1"/>
</dbReference>
<dbReference type="SUPFAM" id="SSF54768">
    <property type="entry name" value="dsRNA-binding domain-like"/>
    <property type="match status" value="1"/>
</dbReference>
<dbReference type="SUPFAM" id="SSF54211">
    <property type="entry name" value="Ribosomal protein S5 domain 2-like"/>
    <property type="match status" value="1"/>
</dbReference>
<dbReference type="PROSITE" id="PS00585">
    <property type="entry name" value="RIBOSOMAL_S5"/>
    <property type="match status" value="1"/>
</dbReference>
<dbReference type="PROSITE" id="PS50881">
    <property type="entry name" value="S5_DSRBD"/>
    <property type="match status" value="1"/>
</dbReference>
<accession>A3MU88</accession>
<feature type="chain" id="PRO_0000293217" description="Small ribosomal subunit protein uS5">
    <location>
        <begin position="1"/>
        <end position="202"/>
    </location>
</feature>
<feature type="domain" description="S5 DRBM" evidence="1">
    <location>
        <begin position="50"/>
        <end position="113"/>
    </location>
</feature>
<organism>
    <name type="scientific">Pyrobaculum calidifontis (strain DSM 21063 / JCM 11548 / VA1)</name>
    <dbReference type="NCBI Taxonomy" id="410359"/>
    <lineage>
        <taxon>Archaea</taxon>
        <taxon>Thermoproteota</taxon>
        <taxon>Thermoprotei</taxon>
        <taxon>Thermoproteales</taxon>
        <taxon>Thermoproteaceae</taxon>
        <taxon>Pyrobaculum</taxon>
    </lineage>
</organism>
<keyword id="KW-0002">3D-structure</keyword>
<keyword id="KW-0687">Ribonucleoprotein</keyword>
<keyword id="KW-0689">Ribosomal protein</keyword>
<keyword id="KW-0694">RNA-binding</keyword>
<keyword id="KW-0699">rRNA-binding</keyword>
<name>RS5_PYRCJ</name>
<sequence>MSVVDLSLWEPKTALGRMVKEGKIRTIDEIFANNLLIKEPEIVDILLPGLKQELLNLNLVQRQTHAGERNQFQAVVAVGNEDGYVGVGIGKSRQVRQAIEKATREAKLNITPVRRGCGSWKCSCDEPHSVPFVVSGKSGSVEVTLIPAPKGVGLVAGDVAKVVLRLAGIKDVWTKTRGDTRTTLNFALAVFNALRNTYYFKL</sequence>